<accession>O05952</accession>
<evidence type="ECO:0000255" key="1">
    <source>
        <dbReference type="HAMAP-Rule" id="MF_00607"/>
    </source>
</evidence>
<proteinExistence type="inferred from homology"/>
<protein>
    <recommendedName>
        <fullName evidence="1">Ribosomal RNA small subunit methyltransferase A</fullName>
        <ecNumber evidence="1">2.1.1.182</ecNumber>
    </recommendedName>
    <alternativeName>
        <fullName evidence="1">16S rRNA (adenine(1518)-N(6)/adenine(1519)-N(6))-dimethyltransferase</fullName>
    </alternativeName>
    <alternativeName>
        <fullName evidence="1">16S rRNA dimethyladenosine transferase</fullName>
    </alternativeName>
    <alternativeName>
        <fullName evidence="1">16S rRNA dimethylase</fullName>
    </alternativeName>
    <alternativeName>
        <fullName evidence="1">S-adenosylmethionine-6-N', N'-adenosyl(rRNA) dimethyltransferase</fullName>
    </alternativeName>
</protein>
<reference key="1">
    <citation type="journal article" date="1997" name="Microbiology">
        <title>Genomic rearrangements during evolution of the obligate intracellular parasite Rickettsia prowazekii as inferred from an analysis of 52015 bp nucleotide sequence.</title>
        <authorList>
            <person name="Andersson J.O."/>
            <person name="Andersson S.G.E."/>
        </authorList>
    </citation>
    <scope>NUCLEOTIDE SEQUENCE [GENOMIC DNA]</scope>
    <source>
        <strain>Madrid E</strain>
    </source>
</reference>
<reference key="2">
    <citation type="journal article" date="1998" name="Nature">
        <title>The genome sequence of Rickettsia prowazekii and the origin of mitochondria.</title>
        <authorList>
            <person name="Andersson S.G.E."/>
            <person name="Zomorodipour A."/>
            <person name="Andersson J.O."/>
            <person name="Sicheritz-Ponten T."/>
            <person name="Alsmark U.C.M."/>
            <person name="Podowski R.M."/>
            <person name="Naeslund A.K."/>
            <person name="Eriksson A.-S."/>
            <person name="Winkler H.H."/>
            <person name="Kurland C.G."/>
        </authorList>
    </citation>
    <scope>NUCLEOTIDE SEQUENCE [LARGE SCALE GENOMIC DNA]</scope>
    <source>
        <strain>Madrid E</strain>
    </source>
</reference>
<sequence length="268" mass="30306">MLPSIVKHATSHKINPLKKHGQNFIFDSSLCDKIIRASNVLENSNVIEIGPGIGGLTRSILQKNPKSLTVIEIDERCIPLLNEIQEYYPNLNIIKQDVLKINLTDLIYDKVTVISNLPYHIGTELVIRLLKEVKLITNMTLMLQKEVVERICAIPSTKAYGRLSVICQILAKVEKCFNVAPTAFYPHPKVYSAIVKIIPLENPPSIALINKVEQITKLVFAGRRKMIKSSLRNLIPNIHEVLTQLKINCNDRAENLTPKDYLRIAMKL</sequence>
<dbReference type="EC" id="2.1.1.182" evidence="1"/>
<dbReference type="EMBL" id="Y11786">
    <property type="protein sequence ID" value="CAA72482.1"/>
    <property type="molecule type" value="Genomic_DNA"/>
</dbReference>
<dbReference type="EMBL" id="AJ235272">
    <property type="protein sequence ID" value="CAA15109.1"/>
    <property type="molecule type" value="Genomic_DNA"/>
</dbReference>
<dbReference type="PIR" id="C71673">
    <property type="entry name" value="C71673"/>
</dbReference>
<dbReference type="RefSeq" id="NP_221033.1">
    <property type="nucleotide sequence ID" value="NC_000963.1"/>
</dbReference>
<dbReference type="RefSeq" id="WP_004599528.1">
    <property type="nucleotide sequence ID" value="NC_000963.1"/>
</dbReference>
<dbReference type="SMR" id="O05952"/>
<dbReference type="STRING" id="272947.gene:17555749"/>
<dbReference type="EnsemblBacteria" id="CAA15109">
    <property type="protein sequence ID" value="CAA15109"/>
    <property type="gene ID" value="CAA15109"/>
</dbReference>
<dbReference type="GeneID" id="57569798"/>
<dbReference type="KEGG" id="rpr:RP672"/>
<dbReference type="PATRIC" id="fig|272947.5.peg.693"/>
<dbReference type="eggNOG" id="COG0030">
    <property type="taxonomic scope" value="Bacteria"/>
</dbReference>
<dbReference type="HOGENOM" id="CLU_041220_0_1_5"/>
<dbReference type="OrthoDB" id="9814755at2"/>
<dbReference type="Proteomes" id="UP000002480">
    <property type="component" value="Chromosome"/>
</dbReference>
<dbReference type="GO" id="GO:0005737">
    <property type="term" value="C:cytoplasm"/>
    <property type="evidence" value="ECO:0007669"/>
    <property type="project" value="UniProtKB-SubCell"/>
</dbReference>
<dbReference type="GO" id="GO:0052908">
    <property type="term" value="F:16S rRNA (adenine(1518)-N(6)/adenine(1519)-N(6))-dimethyltransferase activity"/>
    <property type="evidence" value="ECO:0007669"/>
    <property type="project" value="UniProtKB-EC"/>
</dbReference>
<dbReference type="GO" id="GO:0003723">
    <property type="term" value="F:RNA binding"/>
    <property type="evidence" value="ECO:0007669"/>
    <property type="project" value="UniProtKB-KW"/>
</dbReference>
<dbReference type="CDD" id="cd02440">
    <property type="entry name" value="AdoMet_MTases"/>
    <property type="match status" value="1"/>
</dbReference>
<dbReference type="Gene3D" id="1.10.8.100">
    <property type="entry name" value="Ribosomal RNA adenine dimethylase-like, domain 2"/>
    <property type="match status" value="1"/>
</dbReference>
<dbReference type="Gene3D" id="3.40.50.150">
    <property type="entry name" value="Vaccinia Virus protein VP39"/>
    <property type="match status" value="1"/>
</dbReference>
<dbReference type="HAMAP" id="MF_00607">
    <property type="entry name" value="16SrRNA_methyltr_A"/>
    <property type="match status" value="1"/>
</dbReference>
<dbReference type="InterPro" id="IPR001737">
    <property type="entry name" value="KsgA/Erm"/>
</dbReference>
<dbReference type="InterPro" id="IPR023165">
    <property type="entry name" value="rRNA_Ade_diMease-like_C"/>
</dbReference>
<dbReference type="InterPro" id="IPR020596">
    <property type="entry name" value="rRNA_Ade_Mease_Trfase_CS"/>
</dbReference>
<dbReference type="InterPro" id="IPR020598">
    <property type="entry name" value="rRNA_Ade_methylase_Trfase_N"/>
</dbReference>
<dbReference type="InterPro" id="IPR011530">
    <property type="entry name" value="rRNA_adenine_dimethylase"/>
</dbReference>
<dbReference type="InterPro" id="IPR029063">
    <property type="entry name" value="SAM-dependent_MTases_sf"/>
</dbReference>
<dbReference type="NCBIfam" id="TIGR00755">
    <property type="entry name" value="ksgA"/>
    <property type="match status" value="1"/>
</dbReference>
<dbReference type="PANTHER" id="PTHR11727">
    <property type="entry name" value="DIMETHYLADENOSINE TRANSFERASE"/>
    <property type="match status" value="1"/>
</dbReference>
<dbReference type="PANTHER" id="PTHR11727:SF7">
    <property type="entry name" value="DIMETHYLADENOSINE TRANSFERASE-RELATED"/>
    <property type="match status" value="1"/>
</dbReference>
<dbReference type="Pfam" id="PF00398">
    <property type="entry name" value="RrnaAD"/>
    <property type="match status" value="1"/>
</dbReference>
<dbReference type="SMART" id="SM00650">
    <property type="entry name" value="rADc"/>
    <property type="match status" value="1"/>
</dbReference>
<dbReference type="SUPFAM" id="SSF53335">
    <property type="entry name" value="S-adenosyl-L-methionine-dependent methyltransferases"/>
    <property type="match status" value="1"/>
</dbReference>
<dbReference type="PROSITE" id="PS01131">
    <property type="entry name" value="RRNA_A_DIMETH"/>
    <property type="match status" value="1"/>
</dbReference>
<dbReference type="PROSITE" id="PS51689">
    <property type="entry name" value="SAM_RNA_A_N6_MT"/>
    <property type="match status" value="1"/>
</dbReference>
<comment type="function">
    <text evidence="1">Specifically dimethylates two adjacent adenosines (A1518 and A1519) in the loop of a conserved hairpin near the 3'-end of 16S rRNA in the 30S particle. May play a critical role in biogenesis of 30S subunits.</text>
</comment>
<comment type="catalytic activity">
    <reaction evidence="1">
        <text>adenosine(1518)/adenosine(1519) in 16S rRNA + 4 S-adenosyl-L-methionine = N(6)-dimethyladenosine(1518)/N(6)-dimethyladenosine(1519) in 16S rRNA + 4 S-adenosyl-L-homocysteine + 4 H(+)</text>
        <dbReference type="Rhea" id="RHEA:19609"/>
        <dbReference type="Rhea" id="RHEA-COMP:10232"/>
        <dbReference type="Rhea" id="RHEA-COMP:10233"/>
        <dbReference type="ChEBI" id="CHEBI:15378"/>
        <dbReference type="ChEBI" id="CHEBI:57856"/>
        <dbReference type="ChEBI" id="CHEBI:59789"/>
        <dbReference type="ChEBI" id="CHEBI:74411"/>
        <dbReference type="ChEBI" id="CHEBI:74493"/>
        <dbReference type="EC" id="2.1.1.182"/>
    </reaction>
</comment>
<comment type="subcellular location">
    <subcellularLocation>
        <location evidence="1">Cytoplasm</location>
    </subcellularLocation>
</comment>
<comment type="similarity">
    <text evidence="1">Belongs to the class I-like SAM-binding methyltransferase superfamily. rRNA adenine N(6)-methyltransferase family. RsmA subfamily.</text>
</comment>
<organism>
    <name type="scientific">Rickettsia prowazekii (strain Madrid E)</name>
    <dbReference type="NCBI Taxonomy" id="272947"/>
    <lineage>
        <taxon>Bacteria</taxon>
        <taxon>Pseudomonadati</taxon>
        <taxon>Pseudomonadota</taxon>
        <taxon>Alphaproteobacteria</taxon>
        <taxon>Rickettsiales</taxon>
        <taxon>Rickettsiaceae</taxon>
        <taxon>Rickettsieae</taxon>
        <taxon>Rickettsia</taxon>
        <taxon>typhus group</taxon>
    </lineage>
</organism>
<feature type="chain" id="PRO_0000101595" description="Ribosomal RNA small subunit methyltransferase A">
    <location>
        <begin position="1"/>
        <end position="268"/>
    </location>
</feature>
<feature type="binding site" evidence="1">
    <location>
        <position position="23"/>
    </location>
    <ligand>
        <name>S-adenosyl-L-methionine</name>
        <dbReference type="ChEBI" id="CHEBI:59789"/>
    </ligand>
</feature>
<feature type="binding site" evidence="1">
    <location>
        <position position="25"/>
    </location>
    <ligand>
        <name>S-adenosyl-L-methionine</name>
        <dbReference type="ChEBI" id="CHEBI:59789"/>
    </ligand>
</feature>
<feature type="binding site" evidence="1">
    <location>
        <position position="50"/>
    </location>
    <ligand>
        <name>S-adenosyl-L-methionine</name>
        <dbReference type="ChEBI" id="CHEBI:59789"/>
    </ligand>
</feature>
<feature type="binding site" evidence="1">
    <location>
        <position position="72"/>
    </location>
    <ligand>
        <name>S-adenosyl-L-methionine</name>
        <dbReference type="ChEBI" id="CHEBI:59789"/>
    </ligand>
</feature>
<feature type="binding site" evidence="1">
    <location>
        <position position="97"/>
    </location>
    <ligand>
        <name>S-adenosyl-L-methionine</name>
        <dbReference type="ChEBI" id="CHEBI:59789"/>
    </ligand>
</feature>
<feature type="binding site" evidence="1">
    <location>
        <position position="116"/>
    </location>
    <ligand>
        <name>S-adenosyl-L-methionine</name>
        <dbReference type="ChEBI" id="CHEBI:59789"/>
    </ligand>
</feature>
<gene>
    <name evidence="1" type="primary">rsmA</name>
    <name evidence="1" type="synonym">ksgA</name>
    <name type="ordered locus">RP672</name>
</gene>
<name>RSMA_RICPR</name>
<keyword id="KW-0963">Cytoplasm</keyword>
<keyword id="KW-0489">Methyltransferase</keyword>
<keyword id="KW-1185">Reference proteome</keyword>
<keyword id="KW-0694">RNA-binding</keyword>
<keyword id="KW-0698">rRNA processing</keyword>
<keyword id="KW-0949">S-adenosyl-L-methionine</keyword>
<keyword id="KW-0808">Transferase</keyword>